<organism>
    <name type="scientific">Enterococcus italicus (strain DSM 15952 / CCUG 50447 / LMG 22039 / TP 1.5)</name>
    <dbReference type="NCBI Taxonomy" id="888064"/>
    <lineage>
        <taxon>Bacteria</taxon>
        <taxon>Bacillati</taxon>
        <taxon>Bacillota</taxon>
        <taxon>Bacilli</taxon>
        <taxon>Lactobacillales</taxon>
        <taxon>Enterococcaceae</taxon>
        <taxon>Enterococcus</taxon>
    </lineage>
</organism>
<proteinExistence type="evidence at protein level"/>
<reference key="1">
    <citation type="submission" date="2010-12" db="EMBL/GenBank/DDBJ databases">
        <authorList>
            <person name="Muzny D."/>
            <person name="Qin X."/>
            <person name="Deng J."/>
            <person name="Jiang H."/>
            <person name="Liu Y."/>
            <person name="Qu J."/>
            <person name="Song X.-Z."/>
            <person name="Zhang L."/>
            <person name="Thornton R."/>
            <person name="Coyle M."/>
            <person name="Francisco L."/>
            <person name="Jackson L."/>
            <person name="Javaid M."/>
            <person name="Korchina V."/>
            <person name="Kovar C."/>
            <person name="Mata R."/>
            <person name="Mathew T."/>
            <person name="Ngo R."/>
            <person name="Nguyen L."/>
            <person name="Nguyen N."/>
            <person name="Okwuonu G."/>
            <person name="Ongeri F."/>
            <person name="Pham C."/>
            <person name="Simmons D."/>
            <person name="Wilczek-Boney K."/>
            <person name="Hale W."/>
            <person name="Jakkamsetti A."/>
            <person name="Pham P."/>
            <person name="Ruth R."/>
            <person name="San Lucas F."/>
            <person name="Warren J."/>
            <person name="Zhang J."/>
            <person name="Zhao Z."/>
            <person name="Zhou C."/>
            <person name="Zhu D."/>
            <person name="Lee S."/>
            <person name="Bess C."/>
            <person name="Blankenburg K."/>
            <person name="Forbes L."/>
            <person name="Fu Q."/>
            <person name="Gubbala S."/>
            <person name="Hirani K."/>
            <person name="Jayaseelan J.C."/>
            <person name="Lara F."/>
            <person name="Munidasa M."/>
            <person name="Palculict T."/>
            <person name="Patil S."/>
            <person name="Pu L.-L."/>
            <person name="Saada N."/>
            <person name="Tang L."/>
            <person name="Weissenberger G."/>
            <person name="Zhu Y."/>
            <person name="Hemphill L."/>
            <person name="Shang Y."/>
            <person name="Youmans B."/>
            <person name="Ayvaz T."/>
            <person name="Ross M."/>
            <person name="Santibanez J."/>
            <person name="Aqrawi P."/>
            <person name="Gross S."/>
            <person name="Joshi V."/>
            <person name="Fowler G."/>
            <person name="Nazareth L."/>
            <person name="Reid J."/>
            <person name="Worley K."/>
            <person name="Petrosino J."/>
            <person name="Highlander S."/>
            <person name="Gibbs R."/>
        </authorList>
    </citation>
    <scope>NUCLEOTIDE SEQUENCE [LARGE SCALE GENOMIC DNA]</scope>
    <source>
        <strain>DSM 15952 / CCUG 50447 / LMG 22039 / TP 1.5</strain>
    </source>
</reference>
<reference key="2">
    <citation type="journal article" date="2017" name="Nature">
        <title>Type III CRISPR-Cas systems produce cyclic oligoadenylate second messengers.</title>
        <authorList>
            <person name="Niewoehner O."/>
            <person name="Garcia-Doval C."/>
            <person name="Rostoel J.T."/>
            <person name="Berk C."/>
            <person name="Schwede F."/>
            <person name="Bigler L."/>
            <person name="Hall J."/>
            <person name="Marraffini L.A."/>
            <person name="Jinek M."/>
        </authorList>
    </citation>
    <scope>FUNCTION IN PHAGE RESISTANCE</scope>
    <scope>SUBUNIT</scope>
    <source>
        <strain>DSM 15952 / CCUG 50447 / LMG 22039 / TP 1.5</strain>
    </source>
</reference>
<protein>
    <recommendedName>
        <fullName>CRISPR system Cms protein Csm5</fullName>
    </recommendedName>
    <alternativeName>
        <fullName>CRISPR type III A-associated protein Csm5</fullName>
    </alternativeName>
</protein>
<gene>
    <name type="primary">csm5</name>
    <name type="ORF">HMPREF9088_1943</name>
</gene>
<keyword id="KW-0002">3D-structure</keyword>
<keyword id="KW-0051">Antiviral defense</keyword>
<keyword id="KW-1185">Reference proteome</keyword>
<keyword id="KW-0694">RNA-binding</keyword>
<comment type="function">
    <text evidence="2">CRISPR (clustered regularly interspaced short palindromic repeat) is an adaptive immune system that provides protection against mobile genetic elements (viruses, transposable elements and conjugative plasmids). CRISPR clusters contain spacers, sequences complementary to antecedent mobile elements, and target invading nucleic acids. CRISPR clusters are transcribed and processed into CRISPR RNA (crRNA). The type III-A Csm effector complex binds crRNA and acts as a crRNA-guided RNase, DNase and cyclic oligoadenylate synthase; binding of target RNA cognate to the crRNA is required for all activities. In a heterologous host the appropriately targeted Csm effector complex prevents growth of dsDNA phage phiNM1-gamma6.</text>
</comment>
<comment type="function">
    <text evidence="1">This subunit might be involved in maturation of a crRNA intermediate to its mature form.</text>
</comment>
<comment type="subunit">
    <text evidence="2">Part of the Csm effector complex that includes Cas10, Csm2, Csm3, Csm4 and Csm5.</text>
</comment>
<comment type="miscellaneous">
    <text evidence="2">Encoded in a type III-A CRISPR locus.</text>
</comment>
<comment type="similarity">
    <text evidence="3">Belongs to the CRISPR-associated Csm5 family.</text>
</comment>
<dbReference type="EMBL" id="AEPV01000074">
    <property type="protein sequence ID" value="EFU73213.1"/>
    <property type="molecule type" value="Genomic_DNA"/>
</dbReference>
<dbReference type="RefSeq" id="WP_007208954.1">
    <property type="nucleotide sequence ID" value="NZ_GL622241.1"/>
</dbReference>
<dbReference type="PDB" id="9G9A">
    <property type="method" value="EM"/>
    <property type="resolution" value="2.83 A"/>
    <property type="chains" value="H=1-349"/>
</dbReference>
<dbReference type="PDB" id="9G9B">
    <property type="method" value="EM"/>
    <property type="resolution" value="3.07 A"/>
    <property type="chains" value="H=1-349"/>
</dbReference>
<dbReference type="PDB" id="9G9C">
    <property type="method" value="EM"/>
    <property type="resolution" value="2.72 A"/>
    <property type="chains" value="H=1-349"/>
</dbReference>
<dbReference type="PDB" id="9G9D">
    <property type="method" value="EM"/>
    <property type="resolution" value="2.90 A"/>
    <property type="chains" value="H=1-349"/>
</dbReference>
<dbReference type="PDB" id="9G9E">
    <property type="method" value="EM"/>
    <property type="resolution" value="2.87 A"/>
    <property type="chains" value="H=1-349"/>
</dbReference>
<dbReference type="PDB" id="9G9F">
    <property type="method" value="EM"/>
    <property type="resolution" value="2.93 A"/>
    <property type="chains" value="H=1-349"/>
</dbReference>
<dbReference type="PDB" id="9G9G">
    <property type="method" value="EM"/>
    <property type="resolution" value="3.38 A"/>
    <property type="chains" value="H=1-349"/>
</dbReference>
<dbReference type="PDB" id="9G9H">
    <property type="method" value="EM"/>
    <property type="resolution" value="2.99 A"/>
    <property type="chains" value="H=1-349"/>
</dbReference>
<dbReference type="PDB" id="9G9I">
    <property type="method" value="EM"/>
    <property type="resolution" value="3.31 A"/>
    <property type="chains" value="H=1-349"/>
</dbReference>
<dbReference type="PDB" id="9G9J">
    <property type="method" value="EM"/>
    <property type="resolution" value="3.05 A"/>
    <property type="chains" value="H=1-349"/>
</dbReference>
<dbReference type="PDB" id="9G9K">
    <property type="method" value="EM"/>
    <property type="resolution" value="3.34 A"/>
    <property type="chains" value="H=1-349"/>
</dbReference>
<dbReference type="PDBsum" id="9G9A"/>
<dbReference type="PDBsum" id="9G9B"/>
<dbReference type="PDBsum" id="9G9C"/>
<dbReference type="PDBsum" id="9G9D"/>
<dbReference type="PDBsum" id="9G9E"/>
<dbReference type="PDBsum" id="9G9F"/>
<dbReference type="PDBsum" id="9G9G"/>
<dbReference type="PDBsum" id="9G9H"/>
<dbReference type="PDBsum" id="9G9I"/>
<dbReference type="PDBsum" id="9G9J"/>
<dbReference type="PDBsum" id="9G9K"/>
<dbReference type="EMDB" id="EMD-51145"/>
<dbReference type="EMDB" id="EMD-51146"/>
<dbReference type="EMDB" id="EMD-51147"/>
<dbReference type="EMDB" id="EMD-51148"/>
<dbReference type="EMDB" id="EMD-51149"/>
<dbReference type="EMDB" id="EMD-51150"/>
<dbReference type="EMDB" id="EMD-51151"/>
<dbReference type="EMDB" id="EMD-51152"/>
<dbReference type="EMDB" id="EMD-51153"/>
<dbReference type="EMDB" id="EMD-51154"/>
<dbReference type="EMDB" id="EMD-51155"/>
<dbReference type="SMR" id="E6LHV3"/>
<dbReference type="STRING" id="888064.HMPREF9088_1943"/>
<dbReference type="eggNOG" id="COG1332">
    <property type="taxonomic scope" value="Bacteria"/>
</dbReference>
<dbReference type="HOGENOM" id="CLU_036878_0_0_9"/>
<dbReference type="Proteomes" id="UP000010296">
    <property type="component" value="Unassembled WGS sequence"/>
</dbReference>
<dbReference type="GO" id="GO:0003723">
    <property type="term" value="F:RNA binding"/>
    <property type="evidence" value="ECO:0007669"/>
    <property type="project" value="UniProtKB-KW"/>
</dbReference>
<dbReference type="GO" id="GO:0051607">
    <property type="term" value="P:defense response to virus"/>
    <property type="evidence" value="ECO:0007669"/>
    <property type="project" value="UniProtKB-KW"/>
</dbReference>
<dbReference type="InterPro" id="IPR010173">
    <property type="entry name" value="CRISPR-assoc_Csm5"/>
</dbReference>
<dbReference type="InterPro" id="IPR005537">
    <property type="entry name" value="RAMP_III_fam"/>
</dbReference>
<dbReference type="NCBIfam" id="TIGR01899">
    <property type="entry name" value="cas_TM1807_csm5"/>
    <property type="match status" value="1"/>
</dbReference>
<dbReference type="PANTHER" id="PTHR38007">
    <property type="entry name" value="CRISPR SYSTEM CMS PROTEIN CSM5"/>
    <property type="match status" value="1"/>
</dbReference>
<dbReference type="PANTHER" id="PTHR38007:SF1">
    <property type="entry name" value="CRISPR SYSTEM CMS PROTEIN CSM5"/>
    <property type="match status" value="1"/>
</dbReference>
<dbReference type="Pfam" id="PF03787">
    <property type="entry name" value="RAMPs"/>
    <property type="match status" value="1"/>
</dbReference>
<accession>E6LHV3</accession>
<feature type="chain" id="PRO_0000446123" description="CRISPR system Cms protein Csm5">
    <location>
        <begin position="1"/>
        <end position="349"/>
    </location>
</feature>
<name>CSM5_ENTI1</name>
<evidence type="ECO:0000250" key="1">
    <source>
        <dbReference type="UniProtKB" id="A0A0A7HF79"/>
    </source>
</evidence>
<evidence type="ECO:0000269" key="2">
    <source>
    </source>
</evidence>
<evidence type="ECO:0000305" key="3"/>
<sequence length="349" mass="39958">MIEKVYQVKLKVYGPVHIGSGKIIRKQEYIYDRRKSLAHIVDGPNLVKFLNKKGKFTAYLQYLNTTKERADLYTFLRQEQIDTNDWKTFVLYTERVNQGKIDMKDHNPYSRTSTNRRQVDKGMNDLHLFVRDGRGDLYIPGSSLKGALRTVLEGANQSAEAFHSLSISDSLPIDPKNLAIYQKIDINKELKPMPLYRECVNVGTTVEFTMKINSDDWTIEKIEKQIQQAYLQYWNKWFVGMVTTPGGKAFIKGGGLPSVLHAKHRPTVLFLGGGTGFPSKTTHYLQKPKEQAQKDIFAILQRRFRNVYGKMATVPKNVPMVLKGTVNDSTNKWYQQGVCLLEFQPIGEA</sequence>